<keyword id="KW-1003">Cell membrane</keyword>
<keyword id="KW-0169">Cobalamin biosynthesis</keyword>
<keyword id="KW-0170">Cobalt</keyword>
<keyword id="KW-0171">Cobalt transport</keyword>
<keyword id="KW-0406">Ion transport</keyword>
<keyword id="KW-0472">Membrane</keyword>
<keyword id="KW-1185">Reference proteome</keyword>
<keyword id="KW-0812">Transmembrane</keyword>
<keyword id="KW-1133">Transmembrane helix</keyword>
<keyword id="KW-0813">Transport</keyword>
<proteinExistence type="inferred from homology"/>
<sequence length="96" mass="10117">MNRWLAAGGILLGALVVFSFVSAGAWGGADGVAGDTITTINPSYEPWFQSLWTPPSGEIESLLFSIQAAVGGIIIGYYLGRDRPRGQSQDMGSDLP</sequence>
<protein>
    <recommendedName>
        <fullName evidence="1">Cobalt transport protein CbiN</fullName>
    </recommendedName>
    <alternativeName>
        <fullName evidence="1">Energy-coupling factor transporter probable substrate-capture protein CbiN</fullName>
        <shortName evidence="1">ECF transporter S component CbiN</shortName>
    </alternativeName>
</protein>
<dbReference type="EMBL" id="AE004437">
    <property type="protein sequence ID" value="AAG19892.1"/>
    <property type="molecule type" value="Genomic_DNA"/>
</dbReference>
<dbReference type="PIR" id="H84315">
    <property type="entry name" value="H84315"/>
</dbReference>
<dbReference type="RefSeq" id="WP_010903190.1">
    <property type="nucleotide sequence ID" value="NC_002607.1"/>
</dbReference>
<dbReference type="STRING" id="64091.VNG_1634G"/>
<dbReference type="PaxDb" id="64091-VNG_1634G"/>
<dbReference type="KEGG" id="hal:VNG_1634G"/>
<dbReference type="PATRIC" id="fig|64091.14.peg.1245"/>
<dbReference type="HOGENOM" id="CLU_136197_2_0_2"/>
<dbReference type="InParanoid" id="Q9HPH5"/>
<dbReference type="OrthoDB" id="187156at2157"/>
<dbReference type="UniPathway" id="UPA00148"/>
<dbReference type="Proteomes" id="UP000000554">
    <property type="component" value="Chromosome"/>
</dbReference>
<dbReference type="GO" id="GO:0005886">
    <property type="term" value="C:plasma membrane"/>
    <property type="evidence" value="ECO:0007669"/>
    <property type="project" value="UniProtKB-SubCell"/>
</dbReference>
<dbReference type="GO" id="GO:0015087">
    <property type="term" value="F:cobalt ion transmembrane transporter activity"/>
    <property type="evidence" value="ECO:0007669"/>
    <property type="project" value="UniProtKB-UniRule"/>
</dbReference>
<dbReference type="GO" id="GO:0009236">
    <property type="term" value="P:cobalamin biosynthetic process"/>
    <property type="evidence" value="ECO:0007669"/>
    <property type="project" value="UniProtKB-UniRule"/>
</dbReference>
<dbReference type="HAMAP" id="MF_00330">
    <property type="entry name" value="CbiN"/>
    <property type="match status" value="1"/>
</dbReference>
<dbReference type="InterPro" id="IPR003705">
    <property type="entry name" value="CbiN"/>
</dbReference>
<dbReference type="NCBIfam" id="NF002780">
    <property type="entry name" value="PRK02898.1"/>
    <property type="match status" value="1"/>
</dbReference>
<dbReference type="PANTHER" id="PTHR38662">
    <property type="entry name" value="COBALT TRANSPORT PROTEIN CBIN"/>
    <property type="match status" value="1"/>
</dbReference>
<dbReference type="PANTHER" id="PTHR38662:SF1">
    <property type="entry name" value="COBALT TRANSPORT PROTEIN CBIN"/>
    <property type="match status" value="1"/>
</dbReference>
<dbReference type="Pfam" id="PF02553">
    <property type="entry name" value="CbiN"/>
    <property type="match status" value="1"/>
</dbReference>
<name>CBIN_HALSA</name>
<reference key="1">
    <citation type="journal article" date="2000" name="Proc. Natl. Acad. Sci. U.S.A.">
        <title>Genome sequence of Halobacterium species NRC-1.</title>
        <authorList>
            <person name="Ng W.V."/>
            <person name="Kennedy S.P."/>
            <person name="Mahairas G.G."/>
            <person name="Berquist B."/>
            <person name="Pan M."/>
            <person name="Shukla H.D."/>
            <person name="Lasky S.R."/>
            <person name="Baliga N.S."/>
            <person name="Thorsson V."/>
            <person name="Sbrogna J."/>
            <person name="Swartzell S."/>
            <person name="Weir D."/>
            <person name="Hall J."/>
            <person name="Dahl T.A."/>
            <person name="Welti R."/>
            <person name="Goo Y.A."/>
            <person name="Leithauser B."/>
            <person name="Keller K."/>
            <person name="Cruz R."/>
            <person name="Danson M.J."/>
            <person name="Hough D.W."/>
            <person name="Maddocks D.G."/>
            <person name="Jablonski P.E."/>
            <person name="Krebs M.P."/>
            <person name="Angevine C.M."/>
            <person name="Dale H."/>
            <person name="Isenbarger T.A."/>
            <person name="Peck R.F."/>
            <person name="Pohlschroder M."/>
            <person name="Spudich J.L."/>
            <person name="Jung K.-H."/>
            <person name="Alam M."/>
            <person name="Freitas T."/>
            <person name="Hou S."/>
            <person name="Daniels C.J."/>
            <person name="Dennis P.P."/>
            <person name="Omer A.D."/>
            <person name="Ebhardt H."/>
            <person name="Lowe T.M."/>
            <person name="Liang P."/>
            <person name="Riley M."/>
            <person name="Hood L."/>
            <person name="DasSarma S."/>
        </authorList>
    </citation>
    <scope>NUCLEOTIDE SEQUENCE [LARGE SCALE GENOMIC DNA]</scope>
    <source>
        <strain>ATCC 700922 / JCM 11081 / NRC-1</strain>
    </source>
</reference>
<organism>
    <name type="scientific">Halobacterium salinarum (strain ATCC 700922 / JCM 11081 / NRC-1)</name>
    <name type="common">Halobacterium halobium</name>
    <dbReference type="NCBI Taxonomy" id="64091"/>
    <lineage>
        <taxon>Archaea</taxon>
        <taxon>Methanobacteriati</taxon>
        <taxon>Methanobacteriota</taxon>
        <taxon>Stenosarchaea group</taxon>
        <taxon>Halobacteria</taxon>
        <taxon>Halobacteriales</taxon>
        <taxon>Halobacteriaceae</taxon>
        <taxon>Halobacterium</taxon>
        <taxon>Halobacterium salinarum NRC-34001</taxon>
    </lineage>
</organism>
<accession>Q9HPH5</accession>
<feature type="chain" id="PRO_0000134701" description="Cobalt transport protein CbiN">
    <location>
        <begin position="1"/>
        <end position="96"/>
    </location>
</feature>
<feature type="transmembrane region" description="Helical" evidence="1">
    <location>
        <begin position="4"/>
        <end position="24"/>
    </location>
</feature>
<feature type="transmembrane region" description="Helical" evidence="1">
    <location>
        <begin position="59"/>
        <end position="79"/>
    </location>
</feature>
<gene>
    <name evidence="1" type="primary">cbiN</name>
    <name type="ordered locus">VNG_1634G</name>
</gene>
<comment type="function">
    <text evidence="1">Part of the energy-coupling factor (ECF) transporter complex CbiMNOQ involved in cobalt import.</text>
</comment>
<comment type="pathway">
    <text evidence="1">Cofactor biosynthesis; adenosylcobalamin biosynthesis.</text>
</comment>
<comment type="subunit">
    <text evidence="1">Forms an energy-coupling factor (ECF) transporter complex composed of an ATP-binding protein (A component, CbiO), a transmembrane protein (T component, CbiQ) and 2 possible substrate-capture proteins (S components, CbiM and CbiN) of unknown stoichimetry.</text>
</comment>
<comment type="subcellular location">
    <subcellularLocation>
        <location evidence="1">Cell membrane</location>
        <topology evidence="1">Multi-pass membrane protein</topology>
    </subcellularLocation>
</comment>
<comment type="similarity">
    <text evidence="1">Belongs to the CbiN family.</text>
</comment>
<evidence type="ECO:0000255" key="1">
    <source>
        <dbReference type="HAMAP-Rule" id="MF_00330"/>
    </source>
</evidence>